<protein>
    <recommendedName>
        <fullName evidence="1">tRNA pseudouridine synthase A</fullName>
        <ecNumber evidence="1">5.4.99.12</ecNumber>
    </recommendedName>
    <alternativeName>
        <fullName evidence="1">tRNA pseudouridine(38-40) synthase</fullName>
    </alternativeName>
    <alternativeName>
        <fullName evidence="1">tRNA pseudouridylate synthase I</fullName>
    </alternativeName>
    <alternativeName>
        <fullName evidence="1">tRNA-uridine isomerase I</fullName>
    </alternativeName>
</protein>
<reference key="1">
    <citation type="journal article" date="1998" name="Nature">
        <title>The complete genome of the hyperthermophilic bacterium Aquifex aeolicus.</title>
        <authorList>
            <person name="Deckert G."/>
            <person name="Warren P.V."/>
            <person name="Gaasterland T."/>
            <person name="Young W.G."/>
            <person name="Lenox A.L."/>
            <person name="Graham D.E."/>
            <person name="Overbeek R."/>
            <person name="Snead M.A."/>
            <person name="Keller M."/>
            <person name="Aujay M."/>
            <person name="Huber R."/>
            <person name="Feldman R.A."/>
            <person name="Short J.M."/>
            <person name="Olsen G.J."/>
            <person name="Swanson R.V."/>
        </authorList>
    </citation>
    <scope>NUCLEOTIDE SEQUENCE [LARGE SCALE GENOMIC DNA]</scope>
    <source>
        <strain>VF5</strain>
    </source>
</reference>
<accession>O66953</accession>
<organism>
    <name type="scientific">Aquifex aeolicus (strain VF5)</name>
    <dbReference type="NCBI Taxonomy" id="224324"/>
    <lineage>
        <taxon>Bacteria</taxon>
        <taxon>Pseudomonadati</taxon>
        <taxon>Aquificota</taxon>
        <taxon>Aquificia</taxon>
        <taxon>Aquificales</taxon>
        <taxon>Aquificaceae</taxon>
        <taxon>Aquifex</taxon>
    </lineage>
</organism>
<feature type="chain" id="PRO_0000057317" description="tRNA pseudouridine synthase A">
    <location>
        <begin position="1"/>
        <end position="241"/>
    </location>
</feature>
<feature type="active site" description="Nucleophile" evidence="1">
    <location>
        <position position="52"/>
    </location>
</feature>
<feature type="binding site" evidence="1">
    <location>
        <position position="110"/>
    </location>
    <ligand>
        <name>substrate</name>
    </ligand>
</feature>
<name>TRUA_AQUAE</name>
<comment type="function">
    <text evidence="1">Formation of pseudouridine at positions 38, 39 and 40 in the anticodon stem and loop of transfer RNAs.</text>
</comment>
<comment type="catalytic activity">
    <reaction evidence="1">
        <text>uridine(38/39/40) in tRNA = pseudouridine(38/39/40) in tRNA</text>
        <dbReference type="Rhea" id="RHEA:22376"/>
        <dbReference type="Rhea" id="RHEA-COMP:10085"/>
        <dbReference type="Rhea" id="RHEA-COMP:10087"/>
        <dbReference type="ChEBI" id="CHEBI:65314"/>
        <dbReference type="ChEBI" id="CHEBI:65315"/>
        <dbReference type="EC" id="5.4.99.12"/>
    </reaction>
</comment>
<comment type="subunit">
    <text evidence="1">Homodimer.</text>
</comment>
<comment type="similarity">
    <text evidence="1">Belongs to the tRNA pseudouridine synthase TruA family.</text>
</comment>
<evidence type="ECO:0000255" key="1">
    <source>
        <dbReference type="HAMAP-Rule" id="MF_00171"/>
    </source>
</evidence>
<gene>
    <name evidence="1" type="primary">truA</name>
    <name type="ordered locus">aq_749</name>
</gene>
<keyword id="KW-0413">Isomerase</keyword>
<keyword id="KW-1185">Reference proteome</keyword>
<keyword id="KW-0819">tRNA processing</keyword>
<proteinExistence type="inferred from homology"/>
<dbReference type="EC" id="5.4.99.12" evidence="1"/>
<dbReference type="EMBL" id="AE000657">
    <property type="protein sequence ID" value="AAC06908.1"/>
    <property type="molecule type" value="Genomic_DNA"/>
</dbReference>
<dbReference type="PIR" id="F70365">
    <property type="entry name" value="F70365"/>
</dbReference>
<dbReference type="RefSeq" id="NP_213514.1">
    <property type="nucleotide sequence ID" value="NC_000918.1"/>
</dbReference>
<dbReference type="RefSeq" id="WP_010880452.1">
    <property type="nucleotide sequence ID" value="NC_000918.1"/>
</dbReference>
<dbReference type="SMR" id="O66953"/>
<dbReference type="FunCoup" id="O66953">
    <property type="interactions" value="408"/>
</dbReference>
<dbReference type="STRING" id="224324.aq_749"/>
<dbReference type="EnsemblBacteria" id="AAC06908">
    <property type="protein sequence ID" value="AAC06908"/>
    <property type="gene ID" value="aq_749"/>
</dbReference>
<dbReference type="KEGG" id="aae:aq_749"/>
<dbReference type="PATRIC" id="fig|224324.8.peg.597"/>
<dbReference type="eggNOG" id="COG0101">
    <property type="taxonomic scope" value="Bacteria"/>
</dbReference>
<dbReference type="HOGENOM" id="CLU_014673_0_1_0"/>
<dbReference type="InParanoid" id="O66953"/>
<dbReference type="OrthoDB" id="9811823at2"/>
<dbReference type="Proteomes" id="UP000000798">
    <property type="component" value="Chromosome"/>
</dbReference>
<dbReference type="GO" id="GO:0009982">
    <property type="term" value="F:pseudouridine synthase activity"/>
    <property type="evidence" value="ECO:0000318"/>
    <property type="project" value="GO_Central"/>
</dbReference>
<dbReference type="GO" id="GO:0003723">
    <property type="term" value="F:RNA binding"/>
    <property type="evidence" value="ECO:0007669"/>
    <property type="project" value="InterPro"/>
</dbReference>
<dbReference type="GO" id="GO:0160147">
    <property type="term" value="F:tRNA pseudouridine(38-40) synthase activity"/>
    <property type="evidence" value="ECO:0007669"/>
    <property type="project" value="UniProtKB-EC"/>
</dbReference>
<dbReference type="GO" id="GO:0031119">
    <property type="term" value="P:tRNA pseudouridine synthesis"/>
    <property type="evidence" value="ECO:0000318"/>
    <property type="project" value="GO_Central"/>
</dbReference>
<dbReference type="CDD" id="cd02570">
    <property type="entry name" value="PseudoU_synth_EcTruA"/>
    <property type="match status" value="1"/>
</dbReference>
<dbReference type="FunFam" id="3.30.70.580:FF:000001">
    <property type="entry name" value="tRNA pseudouridine synthase A"/>
    <property type="match status" value="1"/>
</dbReference>
<dbReference type="FunFam" id="3.30.70.660:FF:000037">
    <property type="entry name" value="tRNA pseudouridine synthase A"/>
    <property type="match status" value="1"/>
</dbReference>
<dbReference type="Gene3D" id="3.30.70.660">
    <property type="entry name" value="Pseudouridine synthase I, catalytic domain, C-terminal subdomain"/>
    <property type="match status" value="1"/>
</dbReference>
<dbReference type="Gene3D" id="3.30.70.580">
    <property type="entry name" value="Pseudouridine synthase I, catalytic domain, N-terminal subdomain"/>
    <property type="match status" value="1"/>
</dbReference>
<dbReference type="HAMAP" id="MF_00171">
    <property type="entry name" value="TruA"/>
    <property type="match status" value="1"/>
</dbReference>
<dbReference type="InterPro" id="IPR020103">
    <property type="entry name" value="PsdUridine_synth_cat_dom_sf"/>
</dbReference>
<dbReference type="InterPro" id="IPR001406">
    <property type="entry name" value="PsdUridine_synth_TruA"/>
</dbReference>
<dbReference type="InterPro" id="IPR020097">
    <property type="entry name" value="PsdUridine_synth_TruA_a/b_dom"/>
</dbReference>
<dbReference type="InterPro" id="IPR020095">
    <property type="entry name" value="PsdUridine_synth_TruA_C"/>
</dbReference>
<dbReference type="InterPro" id="IPR020094">
    <property type="entry name" value="TruA/RsuA/RluB/E/F_N"/>
</dbReference>
<dbReference type="NCBIfam" id="TIGR00071">
    <property type="entry name" value="hisT_truA"/>
    <property type="match status" value="1"/>
</dbReference>
<dbReference type="PANTHER" id="PTHR11142">
    <property type="entry name" value="PSEUDOURIDYLATE SYNTHASE"/>
    <property type="match status" value="1"/>
</dbReference>
<dbReference type="PANTHER" id="PTHR11142:SF0">
    <property type="entry name" value="TRNA PSEUDOURIDINE SYNTHASE-LIKE 1"/>
    <property type="match status" value="1"/>
</dbReference>
<dbReference type="Pfam" id="PF01416">
    <property type="entry name" value="PseudoU_synth_1"/>
    <property type="match status" value="2"/>
</dbReference>
<dbReference type="PIRSF" id="PIRSF001430">
    <property type="entry name" value="tRNA_psdUrid_synth"/>
    <property type="match status" value="1"/>
</dbReference>
<dbReference type="SUPFAM" id="SSF55120">
    <property type="entry name" value="Pseudouridine synthase"/>
    <property type="match status" value="1"/>
</dbReference>
<sequence length="241" mass="27770">MPNYLLRLAFVGTNFYGWQVQPNLRTVQGEIQKALSQILCEDVKVTGCCRTDSGVHALDYIANFKTQKDFPEEKLLKALNGILPKDVGVYAVKKVSEEFNARYSVKGKVYLYKIWNSEVRNPFLYPFSWQVKREINTEVLRNILKKFEGTHDFRALTKLEEERNTVINLEEVSLNVEYPLIEIRLKASHFLRYMVRRIVGTAVKISLGLYSEEVLEELLQGKGNSPYTAPPQGLHLEKVLL</sequence>